<evidence type="ECO:0000255" key="1"/>
<evidence type="ECO:0000255" key="2">
    <source>
        <dbReference type="PROSITE-ProRule" id="PRU00102"/>
    </source>
</evidence>
<evidence type="ECO:0000255" key="3">
    <source>
        <dbReference type="PROSITE-ProRule" id="PRU00107"/>
    </source>
</evidence>
<evidence type="ECO:0000269" key="4">
    <source>
    </source>
</evidence>
<evidence type="ECO:0000269" key="5">
    <source>
    </source>
</evidence>
<evidence type="ECO:0000269" key="6">
    <source>
    </source>
</evidence>
<evidence type="ECO:0000269" key="7">
    <source>
    </source>
</evidence>
<evidence type="ECO:0000303" key="8">
    <source>
    </source>
</evidence>
<evidence type="ECO:0000305" key="9"/>
<evidence type="ECO:0000305" key="10">
    <source>
    </source>
</evidence>
<keyword id="KW-0002">3D-structure</keyword>
<keyword id="KW-0067">ATP-binding</keyword>
<keyword id="KW-0997">Cell inner membrane</keyword>
<keyword id="KW-1003">Cell membrane</keyword>
<keyword id="KW-0418">Kinase</keyword>
<keyword id="KW-0472">Membrane</keyword>
<keyword id="KW-0547">Nucleotide-binding</keyword>
<keyword id="KW-0597">Phosphoprotein</keyword>
<keyword id="KW-1185">Reference proteome</keyword>
<keyword id="KW-0808">Transferase</keyword>
<keyword id="KW-0812">Transmembrane</keyword>
<keyword id="KW-1133">Transmembrane helix</keyword>
<keyword id="KW-0902">Two-component regulatory system</keyword>
<feature type="chain" id="PRO_0000074914" description="Sensor histidine kinase HprS">
    <location>
        <begin position="1"/>
        <end position="452"/>
    </location>
</feature>
<feature type="topological domain" description="Cytoplasmic" evidence="9">
    <location>
        <begin position="1"/>
        <end position="9"/>
    </location>
</feature>
<feature type="transmembrane region" description="Helical" evidence="1">
    <location>
        <begin position="10"/>
        <end position="30"/>
    </location>
</feature>
<feature type="topological domain" description="Periplasmic" evidence="9">
    <location>
        <begin position="31"/>
        <end position="158"/>
    </location>
</feature>
<feature type="transmembrane region" description="Helical" evidence="1">
    <location>
        <begin position="159"/>
        <end position="179"/>
    </location>
</feature>
<feature type="topological domain" description="Cytoplasmic" evidence="5">
    <location>
        <begin position="180"/>
        <end position="452"/>
    </location>
</feature>
<feature type="domain" description="HAMP" evidence="2">
    <location>
        <begin position="181"/>
        <end position="234"/>
    </location>
</feature>
<feature type="domain" description="Histidine kinase" evidence="3">
    <location>
        <begin position="242"/>
        <end position="452"/>
    </location>
</feature>
<feature type="site" description="Essential for the response to H(2)O(2)" evidence="7">
    <location>
        <position position="165"/>
    </location>
</feature>
<feature type="modified residue" description="Phosphohistidine; by autocatalysis" evidence="3">
    <location>
        <position position="245"/>
    </location>
</feature>
<feature type="mutagenesis site" description="Loss of H(2)O(2)-dependent transcription of hiuH." evidence="7">
    <original>C</original>
    <variation>A</variation>
    <location>
        <position position="165"/>
    </location>
</feature>
<feature type="mutagenesis site" description="No change in activity." evidence="7">
    <original>C</original>
    <variation>A</variation>
    <location>
        <position position="333"/>
    </location>
</feature>
<feature type="mutagenesis site" description="No change in activity." evidence="7">
    <original>C</original>
    <variation>A</variation>
    <location>
        <position position="338"/>
    </location>
</feature>
<proteinExistence type="evidence at protein level"/>
<dbReference type="EC" id="2.7.13.3" evidence="10"/>
<dbReference type="EMBL" id="U00096">
    <property type="protein sequence ID" value="AAC75034.1"/>
    <property type="molecule type" value="Genomic_DNA"/>
</dbReference>
<dbReference type="EMBL" id="AP009048">
    <property type="protein sequence ID" value="BAA15795.1"/>
    <property type="molecule type" value="Genomic_DNA"/>
</dbReference>
<dbReference type="PIR" id="D64961">
    <property type="entry name" value="D64961"/>
</dbReference>
<dbReference type="RefSeq" id="NP_416477.1">
    <property type="nucleotide sequence ID" value="NC_000913.3"/>
</dbReference>
<dbReference type="RefSeq" id="WP_000826792.1">
    <property type="nucleotide sequence ID" value="NZ_LN832404.1"/>
</dbReference>
<dbReference type="PDB" id="9EPN">
    <property type="method" value="X-ray"/>
    <property type="resolution" value="1.70 A"/>
    <property type="chains" value="A/B=178-452"/>
</dbReference>
<dbReference type="PDBsum" id="9EPN"/>
<dbReference type="SMR" id="P76339"/>
<dbReference type="BioGRID" id="4259161">
    <property type="interactions" value="18"/>
</dbReference>
<dbReference type="BioGRID" id="850838">
    <property type="interactions" value="1"/>
</dbReference>
<dbReference type="DIP" id="DIP-11852N"/>
<dbReference type="FunCoup" id="P76339">
    <property type="interactions" value="26"/>
</dbReference>
<dbReference type="IntAct" id="P76339">
    <property type="interactions" value="4"/>
</dbReference>
<dbReference type="STRING" id="511145.b1968"/>
<dbReference type="PaxDb" id="511145-b1968"/>
<dbReference type="EnsemblBacteria" id="AAC75034">
    <property type="protein sequence ID" value="AAC75034"/>
    <property type="gene ID" value="b1968"/>
</dbReference>
<dbReference type="GeneID" id="946487"/>
<dbReference type="KEGG" id="ecj:JW1951"/>
<dbReference type="KEGG" id="eco:b1968"/>
<dbReference type="KEGG" id="ecoc:C3026_11120"/>
<dbReference type="PATRIC" id="fig|1411691.4.peg.282"/>
<dbReference type="EchoBASE" id="EB3797"/>
<dbReference type="eggNOG" id="COG2205">
    <property type="taxonomic scope" value="Bacteria"/>
</dbReference>
<dbReference type="HOGENOM" id="CLU_000445_89_6_6"/>
<dbReference type="InParanoid" id="P76339"/>
<dbReference type="OMA" id="KSHIHIT"/>
<dbReference type="OrthoDB" id="9809766at2"/>
<dbReference type="PhylomeDB" id="P76339"/>
<dbReference type="BioCyc" id="EcoCyc:G7056-MONOMER"/>
<dbReference type="BioCyc" id="MetaCyc:G7056-MONOMER"/>
<dbReference type="PRO" id="PR:P76339"/>
<dbReference type="Proteomes" id="UP000000625">
    <property type="component" value="Chromosome"/>
</dbReference>
<dbReference type="GO" id="GO:0005886">
    <property type="term" value="C:plasma membrane"/>
    <property type="evidence" value="ECO:0000255"/>
    <property type="project" value="EcoCyc"/>
</dbReference>
<dbReference type="GO" id="GO:0005524">
    <property type="term" value="F:ATP binding"/>
    <property type="evidence" value="ECO:0007669"/>
    <property type="project" value="UniProtKB-KW"/>
</dbReference>
<dbReference type="GO" id="GO:0000155">
    <property type="term" value="F:phosphorelay sensor kinase activity"/>
    <property type="evidence" value="ECO:0007669"/>
    <property type="project" value="InterPro"/>
</dbReference>
<dbReference type="GO" id="GO:0004672">
    <property type="term" value="F:protein kinase activity"/>
    <property type="evidence" value="ECO:0000314"/>
    <property type="project" value="EcoCyc"/>
</dbReference>
<dbReference type="GO" id="GO:0016772">
    <property type="term" value="F:transferase activity, transferring phosphorus-containing groups"/>
    <property type="evidence" value="ECO:0000314"/>
    <property type="project" value="EcoCyc"/>
</dbReference>
<dbReference type="GO" id="GO:0006974">
    <property type="term" value="P:DNA damage response"/>
    <property type="evidence" value="ECO:0000270"/>
    <property type="project" value="EcoCyc"/>
</dbReference>
<dbReference type="GO" id="GO:0000160">
    <property type="term" value="P:phosphorelay signal transduction system"/>
    <property type="evidence" value="ECO:0000318"/>
    <property type="project" value="GO_Central"/>
</dbReference>
<dbReference type="GO" id="GO:0046688">
    <property type="term" value="P:response to copper ion"/>
    <property type="evidence" value="ECO:0000270"/>
    <property type="project" value="EcoCyc"/>
</dbReference>
<dbReference type="GO" id="GO:1901530">
    <property type="term" value="P:response to hypochlorite"/>
    <property type="evidence" value="ECO:0000314"/>
    <property type="project" value="EcoCyc"/>
</dbReference>
<dbReference type="CDD" id="cd16923">
    <property type="entry name" value="HATPase_VanS-like"/>
    <property type="match status" value="1"/>
</dbReference>
<dbReference type="CDD" id="cd00082">
    <property type="entry name" value="HisKA"/>
    <property type="match status" value="1"/>
</dbReference>
<dbReference type="FunFam" id="3.30.565.10:FF:000074">
    <property type="entry name" value="Sensor protein"/>
    <property type="match status" value="1"/>
</dbReference>
<dbReference type="Gene3D" id="1.10.287.130">
    <property type="match status" value="1"/>
</dbReference>
<dbReference type="Gene3D" id="6.10.340.10">
    <property type="match status" value="1"/>
</dbReference>
<dbReference type="Gene3D" id="3.30.565.10">
    <property type="entry name" value="Histidine kinase-like ATPase, C-terminal domain"/>
    <property type="match status" value="1"/>
</dbReference>
<dbReference type="InterPro" id="IPR006290">
    <property type="entry name" value="CztS_silS_copS"/>
</dbReference>
<dbReference type="InterPro" id="IPR003660">
    <property type="entry name" value="HAMP_dom"/>
</dbReference>
<dbReference type="InterPro" id="IPR036890">
    <property type="entry name" value="HATPase_C_sf"/>
</dbReference>
<dbReference type="InterPro" id="IPR005467">
    <property type="entry name" value="His_kinase_dom"/>
</dbReference>
<dbReference type="InterPro" id="IPR003661">
    <property type="entry name" value="HisK_dim/P_dom"/>
</dbReference>
<dbReference type="InterPro" id="IPR036097">
    <property type="entry name" value="HisK_dim/P_sf"/>
</dbReference>
<dbReference type="InterPro" id="IPR004358">
    <property type="entry name" value="Sig_transdc_His_kin-like_C"/>
</dbReference>
<dbReference type="InterPro" id="IPR050428">
    <property type="entry name" value="TCS_sensor_his_kinase"/>
</dbReference>
<dbReference type="NCBIfam" id="TIGR01386">
    <property type="entry name" value="cztS_silS_copS"/>
    <property type="match status" value="1"/>
</dbReference>
<dbReference type="PANTHER" id="PTHR45436:SF3">
    <property type="entry name" value="SENSOR HISTIDINE KINASE HPRS"/>
    <property type="match status" value="1"/>
</dbReference>
<dbReference type="PANTHER" id="PTHR45436">
    <property type="entry name" value="SENSOR HISTIDINE KINASE YKOH"/>
    <property type="match status" value="1"/>
</dbReference>
<dbReference type="Pfam" id="PF02518">
    <property type="entry name" value="HATPase_c"/>
    <property type="match status" value="1"/>
</dbReference>
<dbReference type="Pfam" id="PF00512">
    <property type="entry name" value="HisKA"/>
    <property type="match status" value="1"/>
</dbReference>
<dbReference type="PRINTS" id="PR00344">
    <property type="entry name" value="BCTRLSENSOR"/>
</dbReference>
<dbReference type="SMART" id="SM00387">
    <property type="entry name" value="HATPase_c"/>
    <property type="match status" value="1"/>
</dbReference>
<dbReference type="SMART" id="SM00388">
    <property type="entry name" value="HisKA"/>
    <property type="match status" value="1"/>
</dbReference>
<dbReference type="SUPFAM" id="SSF55874">
    <property type="entry name" value="ATPase domain of HSP90 chaperone/DNA topoisomerase II/histidine kinase"/>
    <property type="match status" value="1"/>
</dbReference>
<dbReference type="SUPFAM" id="SSF47384">
    <property type="entry name" value="Homodimeric domain of signal transducing histidine kinase"/>
    <property type="match status" value="1"/>
</dbReference>
<dbReference type="PROSITE" id="PS50885">
    <property type="entry name" value="HAMP"/>
    <property type="match status" value="1"/>
</dbReference>
<dbReference type="PROSITE" id="PS50109">
    <property type="entry name" value="HIS_KIN"/>
    <property type="match status" value="1"/>
</dbReference>
<gene>
    <name evidence="8" type="primary">hprS</name>
    <name type="synonym">yedV</name>
    <name type="ordered locus">b1968</name>
    <name type="ordered locus">JW1951</name>
</gene>
<protein>
    <recommendedName>
        <fullName evidence="9">Sensor histidine kinase HprS</fullName>
        <ecNumber evidence="10">2.7.13.3</ecNumber>
    </recommendedName>
    <alternativeName>
        <fullName evidence="8">Hydrogen peroxide response sensor</fullName>
    </alternativeName>
</protein>
<comment type="function">
    <text evidence="4 6 7">Member of a two-component regulatory system HprR/HprS involved in response to hydrogen peroxide (PubMed:25568260, PubMed:27983483). Senses H(2)O(2), maybe via the redox state of the membrane (PubMed:27983483). Activates HprR by phosphorylation (PubMed:15522865). Can also phosphorylate CusR (PubMed:15522865).</text>
</comment>
<comment type="catalytic activity">
    <reaction evidence="10">
        <text>ATP + protein L-histidine = ADP + protein N-phospho-L-histidine.</text>
        <dbReference type="EC" id="2.7.13.3"/>
    </reaction>
</comment>
<comment type="interaction">
    <interactant intactId="EBI-554869">
        <id>P76339</id>
    </interactant>
    <interactant intactId="EBI-1130209">
        <id>Q46896</id>
        <label>ygbT</label>
    </interactant>
    <organismsDiffer>false</organismsDiffer>
    <experiments>3</experiments>
</comment>
<comment type="subcellular location">
    <subcellularLocation>
        <location evidence="5">Cell inner membrane</location>
        <topology evidence="1">Multi-pass membrane protein</topology>
    </subcellularLocation>
</comment>
<comment type="PTM">
    <text evidence="4">Autophosphorylated.</text>
</comment>
<comment type="miscellaneous">
    <text evidence="6 7">HprSR and CusSR form a unique regulation system, where both two-component systems recognize and regulate the same set of genes, but under different environmental conditions. HprSR plays a role in H(2)O(2) response regulation, while CusSR plays a role in Cu(2+) response regulation.</text>
</comment>
<organism>
    <name type="scientific">Escherichia coli (strain K12)</name>
    <dbReference type="NCBI Taxonomy" id="83333"/>
    <lineage>
        <taxon>Bacteria</taxon>
        <taxon>Pseudomonadati</taxon>
        <taxon>Pseudomonadota</taxon>
        <taxon>Gammaproteobacteria</taxon>
        <taxon>Enterobacterales</taxon>
        <taxon>Enterobacteriaceae</taxon>
        <taxon>Escherichia</taxon>
    </lineage>
</organism>
<reference key="1">
    <citation type="journal article" date="1996" name="DNA Res.">
        <title>A 460-kb DNA sequence of the Escherichia coli K-12 genome corresponding to the 40.1-50.0 min region on the linkage map.</title>
        <authorList>
            <person name="Itoh T."/>
            <person name="Aiba H."/>
            <person name="Baba T."/>
            <person name="Fujita K."/>
            <person name="Hayashi K."/>
            <person name="Inada T."/>
            <person name="Isono K."/>
            <person name="Kasai H."/>
            <person name="Kimura S."/>
            <person name="Kitakawa M."/>
            <person name="Kitagawa M."/>
            <person name="Makino K."/>
            <person name="Miki T."/>
            <person name="Mizobuchi K."/>
            <person name="Mori H."/>
            <person name="Mori T."/>
            <person name="Motomura K."/>
            <person name="Nakade S."/>
            <person name="Nakamura Y."/>
            <person name="Nashimoto H."/>
            <person name="Nishio Y."/>
            <person name="Oshima T."/>
            <person name="Saito N."/>
            <person name="Sampei G."/>
            <person name="Seki Y."/>
            <person name="Sivasundaram S."/>
            <person name="Tagami H."/>
            <person name="Takeda J."/>
            <person name="Takemoto K."/>
            <person name="Wada C."/>
            <person name="Yamamoto Y."/>
            <person name="Horiuchi T."/>
        </authorList>
    </citation>
    <scope>NUCLEOTIDE SEQUENCE [LARGE SCALE GENOMIC DNA]</scope>
    <source>
        <strain>K12 / W3110 / ATCC 27325 / DSM 5911</strain>
    </source>
</reference>
<reference key="2">
    <citation type="journal article" date="1997" name="Science">
        <title>The complete genome sequence of Escherichia coli K-12.</title>
        <authorList>
            <person name="Blattner F.R."/>
            <person name="Plunkett G. III"/>
            <person name="Bloch C.A."/>
            <person name="Perna N.T."/>
            <person name="Burland V."/>
            <person name="Riley M."/>
            <person name="Collado-Vides J."/>
            <person name="Glasner J.D."/>
            <person name="Rode C.K."/>
            <person name="Mayhew G.F."/>
            <person name="Gregor J."/>
            <person name="Davis N.W."/>
            <person name="Kirkpatrick H.A."/>
            <person name="Goeden M.A."/>
            <person name="Rose D.J."/>
            <person name="Mau B."/>
            <person name="Shao Y."/>
        </authorList>
    </citation>
    <scope>NUCLEOTIDE SEQUENCE [LARGE SCALE GENOMIC DNA]</scope>
    <source>
        <strain>K12 / MG1655 / ATCC 47076</strain>
    </source>
</reference>
<reference key="3">
    <citation type="journal article" date="2006" name="Mol. Syst. Biol.">
        <title>Highly accurate genome sequences of Escherichia coli K-12 strains MG1655 and W3110.</title>
        <authorList>
            <person name="Hayashi K."/>
            <person name="Morooka N."/>
            <person name="Yamamoto Y."/>
            <person name="Fujita K."/>
            <person name="Isono K."/>
            <person name="Choi S."/>
            <person name="Ohtsubo E."/>
            <person name="Baba T."/>
            <person name="Wanner B.L."/>
            <person name="Mori H."/>
            <person name="Horiuchi T."/>
        </authorList>
    </citation>
    <scope>NUCLEOTIDE SEQUENCE [LARGE SCALE GENOMIC DNA]</scope>
    <source>
        <strain>K12 / W3110 / ATCC 27325 / DSM 5911</strain>
    </source>
</reference>
<reference key="4">
    <citation type="journal article" date="2005" name="J. Biol. Chem.">
        <title>Functional characterization in vitro of all two-component signal transduction systems from Escherichia coli.</title>
        <authorList>
            <person name="Yamamoto K."/>
            <person name="Hirao K."/>
            <person name="Oshima T."/>
            <person name="Aiba H."/>
            <person name="Utsumi R."/>
            <person name="Ishihama A."/>
        </authorList>
    </citation>
    <scope>FUNCTION</scope>
    <scope>AUTOPHOSPHORYLATION</scope>
    <scope>CATALYTIC ACTIVITY</scope>
    <source>
        <strain>K12 / W3110 / ATCC 27325 / DSM 5911</strain>
    </source>
</reference>
<reference key="5">
    <citation type="journal article" date="2005" name="Science">
        <title>Global topology analysis of the Escherichia coli inner membrane proteome.</title>
        <authorList>
            <person name="Daley D.O."/>
            <person name="Rapp M."/>
            <person name="Granseth E."/>
            <person name="Melen K."/>
            <person name="Drew D."/>
            <person name="von Heijne G."/>
        </authorList>
    </citation>
    <scope>TOPOLOGY [LARGE SCALE ANALYSIS]</scope>
    <scope>SUBCELLULAR LOCATION</scope>
    <source>
        <strain>K12 / MG1655 / ATCC 47076</strain>
    </source>
</reference>
<reference key="6">
    <citation type="journal article" date="2015" name="Microbiology">
        <title>Cooperative regulation of the common target genes between H(2)O(2)-sensing YedVW and Cu2+-sensing CusSR in Escherichia coli.</title>
        <authorList>
            <person name="Urano H."/>
            <person name="Umezawa Y."/>
            <person name="Yamamoto K."/>
            <person name="Ishihama A."/>
            <person name="Ogasawara H."/>
        </authorList>
    </citation>
    <scope>FUNCTION</scope>
    <scope>INTERPLAY BETWEEN HPRSR AND CUSSR</scope>
</reference>
<reference key="7">
    <citation type="journal article" date="2017" name="Microbiology">
        <title>Cross-regulation between two common ancestral response regulators, HprR and CusR, in Escherichia coli.</title>
        <authorList>
            <person name="Urano H."/>
            <person name="Yoshida M."/>
            <person name="Ogawa A."/>
            <person name="Yamamoto K."/>
            <person name="Ishihama A."/>
            <person name="Ogasawara H."/>
        </authorList>
    </citation>
    <scope>FUNCTION</scope>
    <scope>INTERPLAY BETWEEN HPRSR AND CUSSR</scope>
    <scope>MUTAGENESIS OF CYS-165; CYS-333 AND CYS-338</scope>
</reference>
<accession>P76339</accession>
<name>HPRS_ECOLI</name>
<sequence length="452" mass="50850">MKRLSITVRLTLLFILLLSVAGAGIVWTLYNGLASELKWRDDTTLINRTAQIKQLLIDGVNPDTLPVYFNRMMDVSQDILIIHGDSINKIVNRTNVSDGMLNNIPASETISAAGIYRSIINDTEIDALRINIDEVSPSLTVTVAKLASARHNMLEQYKINSIIICIVAIVLCSVLSPLLIRTGLREIKKLSGVTEALNYNDSREPVEVSALPRELKPLGQALNKMHHALVKDFERLSQFADDLAHELRTPINALLGQNQVTLSQTRSIAEYQKTIAGNIEELENISRLTENILFLARADKNNVLVKLDSLSLNKEVENLLDYLEYLSDEKEICFKVECNQQIFADKILLQRMLSNLIVNAIRYSPEKSRIHITSFLDTNSYLNIDIASPGTKINEPEKLFRRFWRGDNSRHSVGQGLGLSLVKAIAELHGGSATYHYLNKHNVFRITLPQRN</sequence>